<keyword id="KW-0997">Cell inner membrane</keyword>
<keyword id="KW-1003">Cell membrane</keyword>
<keyword id="KW-0201">Cytochrome c-type biogenesis</keyword>
<keyword id="KW-1015">Disulfide bond</keyword>
<keyword id="KW-0472">Membrane</keyword>
<keyword id="KW-0676">Redox-active center</keyword>
<keyword id="KW-1185">Reference proteome</keyword>
<keyword id="KW-0812">Transmembrane</keyword>
<keyword id="KW-1133">Transmembrane helix</keyword>
<dbReference type="EMBL" id="AE004439">
    <property type="protein sequence ID" value="AAK02112.1"/>
    <property type="molecule type" value="Genomic_DNA"/>
</dbReference>
<dbReference type="RefSeq" id="WP_005721368.1">
    <property type="nucleotide sequence ID" value="NC_002663.1"/>
</dbReference>
<dbReference type="SMR" id="Q9CPK9"/>
<dbReference type="STRING" id="272843.PM0028"/>
<dbReference type="EnsemblBacteria" id="AAK02112">
    <property type="protein sequence ID" value="AAK02112"/>
    <property type="gene ID" value="PM0028"/>
</dbReference>
<dbReference type="KEGG" id="pmu:PM0028"/>
<dbReference type="HOGENOM" id="CLU_042529_19_1_6"/>
<dbReference type="OrthoDB" id="9799347at2"/>
<dbReference type="Proteomes" id="UP000000809">
    <property type="component" value="Chromosome"/>
</dbReference>
<dbReference type="GO" id="GO:0030288">
    <property type="term" value="C:outer membrane-bounded periplasmic space"/>
    <property type="evidence" value="ECO:0007669"/>
    <property type="project" value="InterPro"/>
</dbReference>
<dbReference type="GO" id="GO:0005886">
    <property type="term" value="C:plasma membrane"/>
    <property type="evidence" value="ECO:0007669"/>
    <property type="project" value="UniProtKB-SubCell"/>
</dbReference>
<dbReference type="GO" id="GO:0015036">
    <property type="term" value="F:disulfide oxidoreductase activity"/>
    <property type="evidence" value="ECO:0007669"/>
    <property type="project" value="InterPro"/>
</dbReference>
<dbReference type="GO" id="GO:0017004">
    <property type="term" value="P:cytochrome complex assembly"/>
    <property type="evidence" value="ECO:0007669"/>
    <property type="project" value="UniProtKB-KW"/>
</dbReference>
<dbReference type="CDD" id="cd03010">
    <property type="entry name" value="TlpA_like_DsbE"/>
    <property type="match status" value="1"/>
</dbReference>
<dbReference type="Gene3D" id="3.40.30.10">
    <property type="entry name" value="Glutaredoxin"/>
    <property type="match status" value="1"/>
</dbReference>
<dbReference type="InterPro" id="IPR004799">
    <property type="entry name" value="Periplasmic_diS_OxRdtase_DsbE"/>
</dbReference>
<dbReference type="InterPro" id="IPR013740">
    <property type="entry name" value="Redoxin"/>
</dbReference>
<dbReference type="InterPro" id="IPR036249">
    <property type="entry name" value="Thioredoxin-like_sf"/>
</dbReference>
<dbReference type="InterPro" id="IPR017937">
    <property type="entry name" value="Thioredoxin_CS"/>
</dbReference>
<dbReference type="InterPro" id="IPR013766">
    <property type="entry name" value="Thioredoxin_domain"/>
</dbReference>
<dbReference type="InterPro" id="IPR050553">
    <property type="entry name" value="Thioredoxin_ResA/DsbE_sf"/>
</dbReference>
<dbReference type="NCBIfam" id="TIGR00385">
    <property type="entry name" value="dsbE"/>
    <property type="match status" value="1"/>
</dbReference>
<dbReference type="PANTHER" id="PTHR42852">
    <property type="entry name" value="THIOL:DISULFIDE INTERCHANGE PROTEIN DSBE"/>
    <property type="match status" value="1"/>
</dbReference>
<dbReference type="PANTHER" id="PTHR42852:SF6">
    <property type="entry name" value="THIOL:DISULFIDE INTERCHANGE PROTEIN DSBE"/>
    <property type="match status" value="1"/>
</dbReference>
<dbReference type="Pfam" id="PF08534">
    <property type="entry name" value="Redoxin"/>
    <property type="match status" value="1"/>
</dbReference>
<dbReference type="SUPFAM" id="SSF52833">
    <property type="entry name" value="Thioredoxin-like"/>
    <property type="match status" value="1"/>
</dbReference>
<dbReference type="PROSITE" id="PS00194">
    <property type="entry name" value="THIOREDOXIN_1"/>
    <property type="match status" value="1"/>
</dbReference>
<dbReference type="PROSITE" id="PS51352">
    <property type="entry name" value="THIOREDOXIN_2"/>
    <property type="match status" value="1"/>
</dbReference>
<protein>
    <recommendedName>
        <fullName>Probable thiol:disulfide interchange protein DsbE-2</fullName>
    </recommendedName>
    <alternativeName>
        <fullName>Cytochrome c biogenesis protein NrfX</fullName>
    </alternativeName>
</protein>
<proteinExistence type="inferred from homology"/>
<accession>Q9CPK9</accession>
<gene>
    <name type="primary">nrfX</name>
    <name type="synonym">dsbE-2</name>
    <name type="ordered locus">PM0028</name>
</gene>
<evidence type="ECO:0000255" key="1"/>
<evidence type="ECO:0000255" key="2">
    <source>
        <dbReference type="PROSITE-ProRule" id="PRU00691"/>
    </source>
</evidence>
<evidence type="ECO:0000305" key="3"/>
<feature type="chain" id="PRO_0000201308" description="Probable thiol:disulfide interchange protein DsbE-2">
    <location>
        <begin position="1"/>
        <end position="188"/>
    </location>
</feature>
<feature type="topological domain" description="Cytoplasmic" evidence="1">
    <location>
        <begin position="1"/>
        <end position="11"/>
    </location>
</feature>
<feature type="transmembrane region" description="Helical" evidence="1">
    <location>
        <begin position="12"/>
        <end position="32"/>
    </location>
</feature>
<feature type="topological domain" description="Periplasmic" evidence="1">
    <location>
        <begin position="33"/>
        <end position="188"/>
    </location>
</feature>
<feature type="domain" description="Thioredoxin" evidence="2">
    <location>
        <begin position="42"/>
        <end position="179"/>
    </location>
</feature>
<feature type="disulfide bond" description="Redox-active" evidence="2">
    <location>
        <begin position="82"/>
        <end position="85"/>
    </location>
</feature>
<name>NRFX_PASMU</name>
<organism>
    <name type="scientific">Pasteurella multocida (strain Pm70)</name>
    <dbReference type="NCBI Taxonomy" id="272843"/>
    <lineage>
        <taxon>Bacteria</taxon>
        <taxon>Pseudomonadati</taxon>
        <taxon>Pseudomonadota</taxon>
        <taxon>Gammaproteobacteria</taxon>
        <taxon>Pasteurellales</taxon>
        <taxon>Pasteurellaceae</taxon>
        <taxon>Pasteurella</taxon>
    </lineage>
</organism>
<comment type="function">
    <text>Could be involved in disulfide bond formation. Could catalyzes a late, reductive step in the assembly of periplasmic NrfA c-type cytochrome, probably the reduction of disulfide bonds of the apocytochrome c to allow covalent linkage with the heme. Possible subunit of a heme lyase.</text>
</comment>
<comment type="subcellular location">
    <subcellularLocation>
        <location evidence="3">Cell inner membrane</location>
        <topology evidence="3">Single-pass membrane protein</topology>
        <orientation evidence="3">Periplasmic side</orientation>
    </subcellularLocation>
</comment>
<comment type="similarity">
    <text evidence="3">Belongs to the thioredoxin family. DsbE subfamily.</text>
</comment>
<reference key="1">
    <citation type="journal article" date="2001" name="Proc. Natl. Acad. Sci. U.S.A.">
        <title>Complete genomic sequence of Pasteurella multocida Pm70.</title>
        <authorList>
            <person name="May B.J."/>
            <person name="Zhang Q."/>
            <person name="Li L.L."/>
            <person name="Paustian M.L."/>
            <person name="Whittam T.S."/>
            <person name="Kapur V."/>
        </authorList>
    </citation>
    <scope>NUCLEOTIDE SEQUENCE [LARGE SCALE GENOMIC DNA]</scope>
    <source>
        <strain>Pm70</strain>
    </source>
</reference>
<sequence>MSMLHQQKRKNHFVFLPLVILLAVCALLFIGLQQDPQKIASALIGKPVPTFSQADLLRTERRVTQQDLPQQTFLLNVWGSWCAYCKKEHPFLMQLAKSMPIVGLNYRDNPQNALAMLNQLGNPFQLVINDSRGELALNLGVDGAPETYLIDQYGVIRYRYSGPLTPEVWQEMFIPEWQKLEAENAKVR</sequence>